<protein>
    <recommendedName>
        <fullName evidence="1">Diaminopimelate epimerase</fullName>
        <shortName evidence="1">DAP epimerase</shortName>
        <ecNumber evidence="1">5.1.1.7</ecNumber>
    </recommendedName>
    <alternativeName>
        <fullName evidence="1">PLP-independent amino acid racemase</fullName>
    </alternativeName>
</protein>
<comment type="function">
    <text evidence="1">Catalyzes the stereoinversion of LL-2,6-diaminopimelate (L,L-DAP) to meso-diaminopimelate (meso-DAP), a precursor of L-lysine and an essential component of the bacterial peptidoglycan.</text>
</comment>
<comment type="catalytic activity">
    <reaction evidence="1">
        <text>(2S,6S)-2,6-diaminopimelate = meso-2,6-diaminopimelate</text>
        <dbReference type="Rhea" id="RHEA:15393"/>
        <dbReference type="ChEBI" id="CHEBI:57609"/>
        <dbReference type="ChEBI" id="CHEBI:57791"/>
        <dbReference type="EC" id="5.1.1.7"/>
    </reaction>
</comment>
<comment type="pathway">
    <text evidence="1">Amino-acid biosynthesis; L-lysine biosynthesis via DAP pathway; DL-2,6-diaminopimelate from LL-2,6-diaminopimelate: step 1/1.</text>
</comment>
<comment type="subunit">
    <text evidence="1">Homodimer.</text>
</comment>
<comment type="subcellular location">
    <subcellularLocation>
        <location evidence="1">Cytoplasm</location>
    </subcellularLocation>
</comment>
<comment type="similarity">
    <text evidence="1">Belongs to the diaminopimelate epimerase family.</text>
</comment>
<gene>
    <name evidence="1" type="primary">dapF</name>
    <name type="ordered locus">Sama_3249</name>
</gene>
<accession>A1SAP5</accession>
<sequence>MIHFTKMHGLGNDFMVVDGVTQNVFFSPEQIRRLADRNFGIGFDQLLLVEPPYDPDLDFHYRIFNADGSEVEQCGNGARCFARFVRNKGLTQKHKIKVSTSAGKMTLRLERDGGVTVNMGVPILDPAQIPFKAKKFEKTYLLQSAQQTFLCGAVSMGNPHVVLEVDDITQAPVADVGAQLTRHERFPKGVNVGFMQVVAPDHIKLRVYERGAAETLACGSGACAAAVVGQLQGKLGSRVRVDLPGGSLTINWEGEGKPLWMTGPAQQVYDGQIQL</sequence>
<name>DAPF_SHEAM</name>
<organism>
    <name type="scientific">Shewanella amazonensis (strain ATCC BAA-1098 / SB2B)</name>
    <dbReference type="NCBI Taxonomy" id="326297"/>
    <lineage>
        <taxon>Bacteria</taxon>
        <taxon>Pseudomonadati</taxon>
        <taxon>Pseudomonadota</taxon>
        <taxon>Gammaproteobacteria</taxon>
        <taxon>Alteromonadales</taxon>
        <taxon>Shewanellaceae</taxon>
        <taxon>Shewanella</taxon>
    </lineage>
</organism>
<keyword id="KW-0028">Amino-acid biosynthesis</keyword>
<keyword id="KW-0963">Cytoplasm</keyword>
<keyword id="KW-0413">Isomerase</keyword>
<keyword id="KW-0457">Lysine biosynthesis</keyword>
<keyword id="KW-1185">Reference proteome</keyword>
<dbReference type="EC" id="5.1.1.7" evidence="1"/>
<dbReference type="EMBL" id="CP000507">
    <property type="protein sequence ID" value="ABM01452.1"/>
    <property type="molecule type" value="Genomic_DNA"/>
</dbReference>
<dbReference type="RefSeq" id="WP_011761356.1">
    <property type="nucleotide sequence ID" value="NC_008700.1"/>
</dbReference>
<dbReference type="SMR" id="A1SAP5"/>
<dbReference type="STRING" id="326297.Sama_3249"/>
<dbReference type="KEGG" id="saz:Sama_3249"/>
<dbReference type="eggNOG" id="COG0253">
    <property type="taxonomic scope" value="Bacteria"/>
</dbReference>
<dbReference type="HOGENOM" id="CLU_053306_1_1_6"/>
<dbReference type="OrthoDB" id="9805408at2"/>
<dbReference type="UniPathway" id="UPA00034">
    <property type="reaction ID" value="UER00025"/>
</dbReference>
<dbReference type="Proteomes" id="UP000009175">
    <property type="component" value="Chromosome"/>
</dbReference>
<dbReference type="GO" id="GO:0005829">
    <property type="term" value="C:cytosol"/>
    <property type="evidence" value="ECO:0007669"/>
    <property type="project" value="TreeGrafter"/>
</dbReference>
<dbReference type="GO" id="GO:0008837">
    <property type="term" value="F:diaminopimelate epimerase activity"/>
    <property type="evidence" value="ECO:0007669"/>
    <property type="project" value="UniProtKB-UniRule"/>
</dbReference>
<dbReference type="GO" id="GO:0009089">
    <property type="term" value="P:lysine biosynthetic process via diaminopimelate"/>
    <property type="evidence" value="ECO:0007669"/>
    <property type="project" value="UniProtKB-UniRule"/>
</dbReference>
<dbReference type="FunFam" id="3.10.310.10:FF:000001">
    <property type="entry name" value="Diaminopimelate epimerase"/>
    <property type="match status" value="1"/>
</dbReference>
<dbReference type="FunFam" id="3.10.310.10:FF:000002">
    <property type="entry name" value="Diaminopimelate epimerase"/>
    <property type="match status" value="1"/>
</dbReference>
<dbReference type="Gene3D" id="3.10.310.10">
    <property type="entry name" value="Diaminopimelate Epimerase, Chain A, domain 1"/>
    <property type="match status" value="2"/>
</dbReference>
<dbReference type="HAMAP" id="MF_00197">
    <property type="entry name" value="DAP_epimerase"/>
    <property type="match status" value="1"/>
</dbReference>
<dbReference type="InterPro" id="IPR018510">
    <property type="entry name" value="DAP_epimerase_AS"/>
</dbReference>
<dbReference type="InterPro" id="IPR001653">
    <property type="entry name" value="DAP_epimerase_DapF"/>
</dbReference>
<dbReference type="NCBIfam" id="TIGR00652">
    <property type="entry name" value="DapF"/>
    <property type="match status" value="1"/>
</dbReference>
<dbReference type="PANTHER" id="PTHR31689:SF0">
    <property type="entry name" value="DIAMINOPIMELATE EPIMERASE"/>
    <property type="match status" value="1"/>
</dbReference>
<dbReference type="PANTHER" id="PTHR31689">
    <property type="entry name" value="DIAMINOPIMELATE EPIMERASE, CHLOROPLASTIC"/>
    <property type="match status" value="1"/>
</dbReference>
<dbReference type="Pfam" id="PF01678">
    <property type="entry name" value="DAP_epimerase"/>
    <property type="match status" value="2"/>
</dbReference>
<dbReference type="SUPFAM" id="SSF54506">
    <property type="entry name" value="Diaminopimelate epimerase-like"/>
    <property type="match status" value="1"/>
</dbReference>
<dbReference type="PROSITE" id="PS01326">
    <property type="entry name" value="DAP_EPIMERASE"/>
    <property type="match status" value="1"/>
</dbReference>
<feature type="chain" id="PRO_1000011959" description="Diaminopimelate epimerase">
    <location>
        <begin position="1"/>
        <end position="275"/>
    </location>
</feature>
<feature type="active site" description="Proton donor" evidence="1">
    <location>
        <position position="74"/>
    </location>
</feature>
<feature type="active site" description="Proton acceptor" evidence="1">
    <location>
        <position position="218"/>
    </location>
</feature>
<feature type="binding site" evidence="1">
    <location>
        <position position="12"/>
    </location>
    <ligand>
        <name>substrate</name>
    </ligand>
</feature>
<feature type="binding site" evidence="1">
    <location>
        <position position="45"/>
    </location>
    <ligand>
        <name>substrate</name>
    </ligand>
</feature>
<feature type="binding site" evidence="1">
    <location>
        <position position="65"/>
    </location>
    <ligand>
        <name>substrate</name>
    </ligand>
</feature>
<feature type="binding site" evidence="1">
    <location>
        <begin position="75"/>
        <end position="76"/>
    </location>
    <ligand>
        <name>substrate</name>
    </ligand>
</feature>
<feature type="binding site" evidence="1">
    <location>
        <position position="158"/>
    </location>
    <ligand>
        <name>substrate</name>
    </ligand>
</feature>
<feature type="binding site" evidence="1">
    <location>
        <position position="191"/>
    </location>
    <ligand>
        <name>substrate</name>
    </ligand>
</feature>
<feature type="binding site" evidence="1">
    <location>
        <begin position="209"/>
        <end position="210"/>
    </location>
    <ligand>
        <name>substrate</name>
    </ligand>
</feature>
<feature type="binding site" evidence="1">
    <location>
        <begin position="219"/>
        <end position="220"/>
    </location>
    <ligand>
        <name>substrate</name>
    </ligand>
</feature>
<feature type="site" description="Could be important to modulate the pK values of the two catalytic cysteine residues" evidence="1">
    <location>
        <position position="160"/>
    </location>
</feature>
<feature type="site" description="Could be important to modulate the pK values of the two catalytic cysteine residues" evidence="1">
    <location>
        <position position="209"/>
    </location>
</feature>
<feature type="site" description="Important for dimerization" evidence="1">
    <location>
        <position position="269"/>
    </location>
</feature>
<reference key="1">
    <citation type="submission" date="2006-12" db="EMBL/GenBank/DDBJ databases">
        <title>Complete sequence of Shewanella amazonensis SB2B.</title>
        <authorList>
            <consortium name="US DOE Joint Genome Institute"/>
            <person name="Copeland A."/>
            <person name="Lucas S."/>
            <person name="Lapidus A."/>
            <person name="Barry K."/>
            <person name="Detter J.C."/>
            <person name="Glavina del Rio T."/>
            <person name="Hammon N."/>
            <person name="Israni S."/>
            <person name="Dalin E."/>
            <person name="Tice H."/>
            <person name="Pitluck S."/>
            <person name="Munk A.C."/>
            <person name="Brettin T."/>
            <person name="Bruce D."/>
            <person name="Han C."/>
            <person name="Tapia R."/>
            <person name="Gilna P."/>
            <person name="Schmutz J."/>
            <person name="Larimer F."/>
            <person name="Land M."/>
            <person name="Hauser L."/>
            <person name="Kyrpides N."/>
            <person name="Mikhailova N."/>
            <person name="Fredrickson J."/>
            <person name="Richardson P."/>
        </authorList>
    </citation>
    <scope>NUCLEOTIDE SEQUENCE [LARGE SCALE GENOMIC DNA]</scope>
    <source>
        <strain>ATCC BAA-1098 / SB2B</strain>
    </source>
</reference>
<proteinExistence type="inferred from homology"/>
<evidence type="ECO:0000255" key="1">
    <source>
        <dbReference type="HAMAP-Rule" id="MF_00197"/>
    </source>
</evidence>